<sequence>MPRKPRHRVPEILWRLFGNRARNLNDAIVDLIPNRNIQPEQCRCRGQGCLGCSSDKPAFLLRSDDPIHYRKLLHRCFVVLHEQTPPLLDFSPTSWWSQREIVERIIEMMQSGCDCQNVICARYDKYDQSSPILELLTSSSWEFLLKRVGHDVMVYLLQQTSIFLPLLGKKHQQVSGPPLCIKHKRTLSVHENKRKRDDNVQPPTKRQWLSSAVDDCPKDDSATITPIVGEDVDQHREKKTTKRSRIYLKRRRKQRKVNFKKVDCNAPCITPSTNGKVSTGNDEMNLHIGINGSLTDFVKQAKQVKRNKNFKFGLSETYSVIPPNHILKTLRPNCSDSKLLMNHIFGEVNVWSTTPSHGKGNCPSGSICLYHSLLKSLKNLIGKTKSSHLKMLLDKHCPVLLLQEDALKSGTTSQSSRRQKADKLPHGSSSSQTGKPKCPSVEERKLYCTNDQVVSFIWAICRYIVPESLLGTTHQMRVLRKNIAWFVSRRRNEKCTVNQFLHKVKPSDFPFFARKELCCMVNGHELQSESIRSTQQMLCTKWISWLFLEIVKKLVHFNFYATESQGGRLNIYYYRKRSWERLISKEISKALDGYVLVDDAEAESSRKKLSKFRFLPKANGVRMVLDFSSSSRSQSLRDTHAVLKDIQLKEPDVLGSSVFDHDDFYRNLCPYLIHLRSQSGELPPLYFVVADVFKAFDSVDQGKLLHVIQSFLKDEYILNRCRLVCCGKRSNWVNKILVSSDKNSNFSRFTSTVPYNALQSIVVDKGENHRVRKKDLMVWIGNMLKNNMLQLDKSFYVQIAGIPQGHRLSSLLCCFYYGHLERTLIYPFLEEASKDVSSKECSREEELIIPTSYKLLRFIDDYLFVSTSRDQASSFYHRLKHGFKDYNCFMNETKFCINFEDKEEHRCSSNRMFVGDNGVPFVRWTGLLINSRTFEVQVDYTRYLSGHISSTFSVAWQNKPVRNLRQKLCYFLVPKCHPILFDSNINSGEIVRLNIYQIFLLAAMKFHCYVYEVSRFWKLHPQTLFKFITISVRYMFRLINRRVRRINTGSSFRPVLKLYKEEVIWLGLDAYIQVLKKKNSRYRMLLIYLKSALSKHSLSQQLSSELRYATDRSNSSSLWKLNY</sequence>
<dbReference type="EC" id="2.7.7.49"/>
<dbReference type="EMBL" id="AF135454">
    <property type="protein sequence ID" value="AAD54777.1"/>
    <property type="molecule type" value="mRNA"/>
</dbReference>
<dbReference type="EMBL" id="AF172097">
    <property type="protein sequence ID" value="AAD54276.1"/>
    <property type="molecule type" value="Genomic_DNA"/>
</dbReference>
<dbReference type="EMBL" id="AL391147">
    <property type="protein sequence ID" value="CAC01849.1"/>
    <property type="molecule type" value="Genomic_DNA"/>
</dbReference>
<dbReference type="EMBL" id="CP002688">
    <property type="protein sequence ID" value="AED92349.1"/>
    <property type="molecule type" value="Genomic_DNA"/>
</dbReference>
<dbReference type="PIR" id="T51517">
    <property type="entry name" value="T51517"/>
</dbReference>
<dbReference type="RefSeq" id="NP_197187.1">
    <property type="nucleotide sequence ID" value="NM_121691.4"/>
</dbReference>
<dbReference type="SMR" id="Q9SPU7"/>
<dbReference type="BioGRID" id="16824">
    <property type="interactions" value="68"/>
</dbReference>
<dbReference type="FunCoup" id="Q9SPU7">
    <property type="interactions" value="220"/>
</dbReference>
<dbReference type="IntAct" id="Q9SPU7">
    <property type="interactions" value="1"/>
</dbReference>
<dbReference type="STRING" id="3702.Q9SPU7"/>
<dbReference type="iPTMnet" id="Q9SPU7"/>
<dbReference type="PaxDb" id="3702-AT5G16850.1"/>
<dbReference type="EnsemblPlants" id="AT5G16850.1">
    <property type="protein sequence ID" value="AT5G16850.1"/>
    <property type="gene ID" value="AT5G16850"/>
</dbReference>
<dbReference type="GeneID" id="831548"/>
<dbReference type="Gramene" id="AT5G16850.1">
    <property type="protein sequence ID" value="AT5G16850.1"/>
    <property type="gene ID" value="AT5G16850"/>
</dbReference>
<dbReference type="KEGG" id="ath:AT5G16850"/>
<dbReference type="Araport" id="AT5G16850"/>
<dbReference type="TAIR" id="AT5G16850">
    <property type="gene designation" value="TERT"/>
</dbReference>
<dbReference type="eggNOG" id="KOG1005">
    <property type="taxonomic scope" value="Eukaryota"/>
</dbReference>
<dbReference type="HOGENOM" id="CLU_001996_1_0_1"/>
<dbReference type="InParanoid" id="Q9SPU7"/>
<dbReference type="OMA" id="SYKAVQW"/>
<dbReference type="PhylomeDB" id="Q9SPU7"/>
<dbReference type="PRO" id="PR:Q9SPU7"/>
<dbReference type="Proteomes" id="UP000006548">
    <property type="component" value="Chromosome 5"/>
</dbReference>
<dbReference type="ExpressionAtlas" id="Q9SPU7">
    <property type="expression patterns" value="baseline and differential"/>
</dbReference>
<dbReference type="GO" id="GO:0000781">
    <property type="term" value="C:chromosome, telomeric region"/>
    <property type="evidence" value="ECO:0007669"/>
    <property type="project" value="UniProtKB-SubCell"/>
</dbReference>
<dbReference type="GO" id="GO:0005634">
    <property type="term" value="C:nucleus"/>
    <property type="evidence" value="ECO:0000314"/>
    <property type="project" value="TAIR"/>
</dbReference>
<dbReference type="GO" id="GO:0003677">
    <property type="term" value="F:DNA binding"/>
    <property type="evidence" value="ECO:0007669"/>
    <property type="project" value="UniProtKB-KW"/>
</dbReference>
<dbReference type="GO" id="GO:0046872">
    <property type="term" value="F:metal ion binding"/>
    <property type="evidence" value="ECO:0007669"/>
    <property type="project" value="UniProtKB-KW"/>
</dbReference>
<dbReference type="GO" id="GO:0003720">
    <property type="term" value="F:telomerase activity"/>
    <property type="evidence" value="ECO:0000314"/>
    <property type="project" value="TAIR"/>
</dbReference>
<dbReference type="GO" id="GO:0000723">
    <property type="term" value="P:telomere maintenance"/>
    <property type="evidence" value="ECO:0000314"/>
    <property type="project" value="TAIR"/>
</dbReference>
<dbReference type="GO" id="GO:0007004">
    <property type="term" value="P:telomere maintenance via telomerase"/>
    <property type="evidence" value="ECO:0000315"/>
    <property type="project" value="TAIR"/>
</dbReference>
<dbReference type="CDD" id="cd01648">
    <property type="entry name" value="TERT"/>
    <property type="match status" value="1"/>
</dbReference>
<dbReference type="FunFam" id="1.10.357.90:FF:000002">
    <property type="entry name" value="Telomerase reverse transcriptase"/>
    <property type="match status" value="1"/>
</dbReference>
<dbReference type="FunFam" id="3.30.70.2630:FF:000002">
    <property type="entry name" value="Telomerase reverse transcriptase"/>
    <property type="match status" value="1"/>
</dbReference>
<dbReference type="Gene3D" id="1.10.132.70">
    <property type="match status" value="1"/>
</dbReference>
<dbReference type="Gene3D" id="1.10.357.90">
    <property type="match status" value="1"/>
</dbReference>
<dbReference type="Gene3D" id="3.30.70.2630">
    <property type="match status" value="1"/>
</dbReference>
<dbReference type="InterPro" id="IPR043502">
    <property type="entry name" value="DNA/RNA_pol_sf"/>
</dbReference>
<dbReference type="InterPro" id="IPR000477">
    <property type="entry name" value="RT_dom"/>
</dbReference>
<dbReference type="InterPro" id="IPR021891">
    <property type="entry name" value="Telomerase_RBD"/>
</dbReference>
<dbReference type="InterPro" id="IPR003545">
    <property type="entry name" value="Telomerase_RT"/>
</dbReference>
<dbReference type="InterPro" id="IPR049139">
    <property type="entry name" value="TERT_C"/>
</dbReference>
<dbReference type="PANTHER" id="PTHR12066">
    <property type="entry name" value="TELOMERASE REVERSE TRANSCRIPTASE"/>
    <property type="match status" value="1"/>
</dbReference>
<dbReference type="PANTHER" id="PTHR12066:SF0">
    <property type="entry name" value="TELOMERASE REVERSE TRANSCRIPTASE"/>
    <property type="match status" value="1"/>
</dbReference>
<dbReference type="Pfam" id="PF12009">
    <property type="entry name" value="Telomerase_RBD"/>
    <property type="match status" value="1"/>
</dbReference>
<dbReference type="Pfam" id="PF21399">
    <property type="entry name" value="TERT_C"/>
    <property type="match status" value="1"/>
</dbReference>
<dbReference type="PRINTS" id="PR01365">
    <property type="entry name" value="TELOMERASERT"/>
</dbReference>
<dbReference type="SMART" id="SM00975">
    <property type="entry name" value="Telomerase_RBD"/>
    <property type="match status" value="1"/>
</dbReference>
<dbReference type="SUPFAM" id="SSF56672">
    <property type="entry name" value="DNA/RNA polymerases"/>
    <property type="match status" value="1"/>
</dbReference>
<dbReference type="PROSITE" id="PS50878">
    <property type="entry name" value="RT_POL"/>
    <property type="match status" value="1"/>
</dbReference>
<organism>
    <name type="scientific">Arabidopsis thaliana</name>
    <name type="common">Mouse-ear cress</name>
    <dbReference type="NCBI Taxonomy" id="3702"/>
    <lineage>
        <taxon>Eukaryota</taxon>
        <taxon>Viridiplantae</taxon>
        <taxon>Streptophyta</taxon>
        <taxon>Embryophyta</taxon>
        <taxon>Tracheophyta</taxon>
        <taxon>Spermatophyta</taxon>
        <taxon>Magnoliopsida</taxon>
        <taxon>eudicotyledons</taxon>
        <taxon>Gunneridae</taxon>
        <taxon>Pentapetalae</taxon>
        <taxon>rosids</taxon>
        <taxon>malvids</taxon>
        <taxon>Brassicales</taxon>
        <taxon>Brassicaceae</taxon>
        <taxon>Camelineae</taxon>
        <taxon>Arabidopsis</taxon>
    </lineage>
</organism>
<comment type="function">
    <text evidence="4 5 6 7">Telomerase is a ribonucleoprotein enzyme essential for the replication of chromosome termini in most eukaryotes. It elongates telomeres. It is a reverse transcriptase that adds simple sequence repeats to chromosome ends by copying a template sequence within the RNA component of the enzyme. Required to prevent genome instability induced by breakage-fusion-bridge (BFB) cycles. Can extend completely non-telomeric sequences using RNA template in vitro.</text>
</comment>
<comment type="catalytic activity">
    <reaction evidence="2">
        <text>DNA(n) + a 2'-deoxyribonucleoside 5'-triphosphate = DNA(n+1) + diphosphate</text>
        <dbReference type="Rhea" id="RHEA:22508"/>
        <dbReference type="Rhea" id="RHEA-COMP:17339"/>
        <dbReference type="Rhea" id="RHEA-COMP:17340"/>
        <dbReference type="ChEBI" id="CHEBI:33019"/>
        <dbReference type="ChEBI" id="CHEBI:61560"/>
        <dbReference type="ChEBI" id="CHEBI:173112"/>
        <dbReference type="EC" id="2.7.7.49"/>
    </reaction>
</comment>
<comment type="subunit">
    <text evidence="9 12">Component of the telomerase ribonucleoprotein complex (Probable). Interacts with POT1A.</text>
</comment>
<comment type="interaction">
    <interactant intactId="EBI-1606133">
        <id>Q9SPU7</id>
    </interactant>
    <interactant intactId="EBI-1606062">
        <id>Q56Y52</id>
        <label>POT1A</label>
    </interactant>
    <organismsDiffer>false</organismsDiffer>
    <experiments>4</experiments>
</comment>
<comment type="subcellular location">
    <subcellularLocation>
        <location evidence="10">Nucleus</location>
    </subcellularLocation>
    <subcellularLocation>
        <location evidence="1">Chromosome</location>
        <location evidence="1">Telomere</location>
    </subcellularLocation>
</comment>
<comment type="disruption phenotype">
    <text evidence="5 7 8 11">Low rates of telomere shortening at each generation. Null mutant plants can survive up to 10 generations before dying. Accelerated proliferation and cell death in dedifferentiated cells.</text>
</comment>
<comment type="miscellaneous">
    <text>In the absence of telomerase, telomeres decline by approximately 500 bp per generation, a rate 10 times slower than seen in telomerase-deficient mice. This may be due to alternative telomere lengthening, a process which is activated in early embryonic development.</text>
</comment>
<comment type="similarity">
    <text evidence="12">Belongs to the reverse transcriptase family. Telomerase subfamily.</text>
</comment>
<feature type="chain" id="PRO_0000412607" description="Telomerase reverse transcriptase">
    <location>
        <begin position="1"/>
        <end position="1123"/>
    </location>
</feature>
<feature type="domain" description="Reverse transcriptase" evidence="2">
    <location>
        <begin position="596"/>
        <end position="929"/>
    </location>
</feature>
<feature type="region of interest" description="Disordered" evidence="3">
    <location>
        <begin position="191"/>
        <end position="242"/>
    </location>
</feature>
<feature type="region of interest" description="Disordered" evidence="3">
    <location>
        <begin position="410"/>
        <end position="439"/>
    </location>
</feature>
<feature type="compositionally biased region" description="Polar residues" evidence="3">
    <location>
        <begin position="201"/>
        <end position="210"/>
    </location>
</feature>
<feature type="binding site" evidence="2">
    <location>
        <position position="691"/>
    </location>
    <ligand>
        <name>Mg(2+)</name>
        <dbReference type="ChEBI" id="CHEBI:18420"/>
        <note>catalytic</note>
    </ligand>
</feature>
<feature type="binding site" evidence="2">
    <location>
        <position position="860"/>
    </location>
    <ligand>
        <name>Mg(2+)</name>
        <dbReference type="ChEBI" id="CHEBI:18420"/>
        <note>catalytic</note>
    </ligand>
</feature>
<feature type="binding site" evidence="2">
    <location>
        <position position="861"/>
    </location>
    <ligand>
        <name>Mg(2+)</name>
        <dbReference type="ChEBI" id="CHEBI:18420"/>
        <note>catalytic</note>
    </ligand>
</feature>
<feature type="sequence conflict" description="In Ref. 2; AAD54276." evidence="12" ref="2">
    <original>R</original>
    <variation>K</variation>
    <location>
        <position position="1107"/>
    </location>
</feature>
<keyword id="KW-0158">Chromosome</keyword>
<keyword id="KW-0238">DNA-binding</keyword>
<keyword id="KW-0460">Magnesium</keyword>
<keyword id="KW-0479">Metal-binding</keyword>
<keyword id="KW-0548">Nucleotidyltransferase</keyword>
<keyword id="KW-0539">Nucleus</keyword>
<keyword id="KW-1185">Reference proteome</keyword>
<keyword id="KW-0695">RNA-directed DNA polymerase</keyword>
<keyword id="KW-0779">Telomere</keyword>
<keyword id="KW-0808">Transferase</keyword>
<gene>
    <name type="primary">TERT</name>
    <name type="ordered locus">At5g16850</name>
    <name type="ORF">F5E19.190</name>
</gene>
<protein>
    <recommendedName>
        <fullName>Telomerase reverse transcriptase</fullName>
        <shortName>AtTERT</shortName>
        <ecNumber>2.7.7.49</ecNumber>
    </recommendedName>
</protein>
<proteinExistence type="evidence at protein level"/>
<reference key="1">
    <citation type="journal article" date="1999" name="FEBS Lett.">
        <title>Molecular cloning and characterization of AtTERT, a telomerase reverse transcriptase homolog in Arabidopsis thaliana.</title>
        <authorList>
            <person name="Oguchi K."/>
            <person name="Liu H."/>
            <person name="Tamura K."/>
            <person name="Takahashi H."/>
        </authorList>
    </citation>
    <scope>NUCLEOTIDE SEQUENCE [MRNA]</scope>
    <scope>FUNCTION</scope>
    <source>
        <strain>cv. Columbia</strain>
    </source>
</reference>
<reference key="2">
    <citation type="journal article" date="1999" name="Proc. Natl. Acad. Sci. U.S.A.">
        <title>Disruption of the telomerase catalytic subunit gene from Arabidopsis inactivates telomerase and leads to a slow loss of telomeric DNA.</title>
        <authorList>
            <person name="Fitzgerald M.S."/>
            <person name="Riha K."/>
            <person name="Gao F."/>
            <person name="Ren S."/>
            <person name="McKnight T.D."/>
            <person name="Shippen D.E."/>
        </authorList>
    </citation>
    <scope>NUCLEOTIDE SEQUENCE [GENOMIC DNA]</scope>
    <scope>FUNCTION</scope>
    <scope>DISRUPTION PHENOTYPE</scope>
    <source>
        <strain>cv. Landsberg erecta</strain>
    </source>
</reference>
<reference key="3">
    <citation type="journal article" date="2000" name="Nature">
        <title>Sequence and analysis of chromosome 5 of the plant Arabidopsis thaliana.</title>
        <authorList>
            <person name="Tabata S."/>
            <person name="Kaneko T."/>
            <person name="Nakamura Y."/>
            <person name="Kotani H."/>
            <person name="Kato T."/>
            <person name="Asamizu E."/>
            <person name="Miyajima N."/>
            <person name="Sasamoto S."/>
            <person name="Kimura T."/>
            <person name="Hosouchi T."/>
            <person name="Kawashima K."/>
            <person name="Kohara M."/>
            <person name="Matsumoto M."/>
            <person name="Matsuno A."/>
            <person name="Muraki A."/>
            <person name="Nakayama S."/>
            <person name="Nakazaki N."/>
            <person name="Naruo K."/>
            <person name="Okumura S."/>
            <person name="Shinpo S."/>
            <person name="Takeuchi C."/>
            <person name="Wada T."/>
            <person name="Watanabe A."/>
            <person name="Yamada M."/>
            <person name="Yasuda M."/>
            <person name="Sato S."/>
            <person name="de la Bastide M."/>
            <person name="Huang E."/>
            <person name="Spiegel L."/>
            <person name="Gnoj L."/>
            <person name="O'Shaughnessy A."/>
            <person name="Preston R."/>
            <person name="Habermann K."/>
            <person name="Murray J."/>
            <person name="Johnson D."/>
            <person name="Rohlfing T."/>
            <person name="Nelson J."/>
            <person name="Stoneking T."/>
            <person name="Pepin K."/>
            <person name="Spieth J."/>
            <person name="Sekhon M."/>
            <person name="Armstrong J."/>
            <person name="Becker M."/>
            <person name="Belter E."/>
            <person name="Cordum H."/>
            <person name="Cordes M."/>
            <person name="Courtney L."/>
            <person name="Courtney W."/>
            <person name="Dante M."/>
            <person name="Du H."/>
            <person name="Edwards J."/>
            <person name="Fryman J."/>
            <person name="Haakensen B."/>
            <person name="Lamar E."/>
            <person name="Latreille P."/>
            <person name="Leonard S."/>
            <person name="Meyer R."/>
            <person name="Mulvaney E."/>
            <person name="Ozersky P."/>
            <person name="Riley A."/>
            <person name="Strowmatt C."/>
            <person name="Wagner-McPherson C."/>
            <person name="Wollam A."/>
            <person name="Yoakum M."/>
            <person name="Bell M."/>
            <person name="Dedhia N."/>
            <person name="Parnell L."/>
            <person name="Shah R."/>
            <person name="Rodriguez M."/>
            <person name="Hoon See L."/>
            <person name="Vil D."/>
            <person name="Baker J."/>
            <person name="Kirchoff K."/>
            <person name="Toth K."/>
            <person name="King L."/>
            <person name="Bahret A."/>
            <person name="Miller B."/>
            <person name="Marra M.A."/>
            <person name="Martienssen R."/>
            <person name="McCombie W.R."/>
            <person name="Wilson R.K."/>
            <person name="Murphy G."/>
            <person name="Bancroft I."/>
            <person name="Volckaert G."/>
            <person name="Wambutt R."/>
            <person name="Duesterhoeft A."/>
            <person name="Stiekema W."/>
            <person name="Pohl T."/>
            <person name="Entian K.-D."/>
            <person name="Terryn N."/>
            <person name="Hartley N."/>
            <person name="Bent E."/>
            <person name="Johnson S."/>
            <person name="Langham S.-A."/>
            <person name="McCullagh B."/>
            <person name="Robben J."/>
            <person name="Grymonprez B."/>
            <person name="Zimmermann W."/>
            <person name="Ramsperger U."/>
            <person name="Wedler H."/>
            <person name="Balke K."/>
            <person name="Wedler E."/>
            <person name="Peters S."/>
            <person name="van Staveren M."/>
            <person name="Dirkse W."/>
            <person name="Mooijman P."/>
            <person name="Klein Lankhorst R."/>
            <person name="Weitzenegger T."/>
            <person name="Bothe G."/>
            <person name="Rose M."/>
            <person name="Hauf J."/>
            <person name="Berneiser S."/>
            <person name="Hempel S."/>
            <person name="Feldpausch M."/>
            <person name="Lamberth S."/>
            <person name="Villarroel R."/>
            <person name="Gielen J."/>
            <person name="Ardiles W."/>
            <person name="Bents O."/>
            <person name="Lemcke K."/>
            <person name="Kolesov G."/>
            <person name="Mayer K.F.X."/>
            <person name="Rudd S."/>
            <person name="Schoof H."/>
            <person name="Schueller C."/>
            <person name="Zaccaria P."/>
            <person name="Mewes H.-W."/>
            <person name="Bevan M."/>
            <person name="Fransz P.F."/>
        </authorList>
    </citation>
    <scope>NUCLEOTIDE SEQUENCE [LARGE SCALE GENOMIC DNA]</scope>
    <source>
        <strain>cv. Columbia</strain>
    </source>
</reference>
<reference key="4">
    <citation type="journal article" date="2017" name="Plant J.">
        <title>Araport11: a complete reannotation of the Arabidopsis thaliana reference genome.</title>
        <authorList>
            <person name="Cheng C.Y."/>
            <person name="Krishnakumar V."/>
            <person name="Chan A.P."/>
            <person name="Thibaud-Nissen F."/>
            <person name="Schobel S."/>
            <person name="Town C.D."/>
        </authorList>
    </citation>
    <scope>GENOME REANNOTATION</scope>
    <source>
        <strain>cv. Columbia</strain>
    </source>
</reference>
<reference key="5">
    <citation type="journal article" date="2001" name="Plant J.">
        <title>Different modes of de novo telomere formation by plant telomerases.</title>
        <authorList>
            <person name="Fitzgerald M.S."/>
            <person name="Shakirov E.V."/>
            <person name="Hood E.E."/>
            <person name="McKnight T.D."/>
            <person name="Shippen D.E."/>
        </authorList>
    </citation>
    <scope>FUNCTION</scope>
</reference>
<reference key="6">
    <citation type="journal article" date="2003" name="Chromosoma">
        <title>Rearrangements of ribosomal DNA clusters in late generation telomerase-deficient Arabidopsis.</title>
        <authorList>
            <person name="Siroky J."/>
            <person name="Zluvova J."/>
            <person name="Riha K."/>
            <person name="Shippen D.E."/>
            <person name="Vyskot B."/>
        </authorList>
    </citation>
    <scope>FUNCTION</scope>
    <scope>DISRUPTION PHENOTYPE</scope>
</reference>
<reference key="7">
    <citation type="journal article" date="2007" name="Dev. Biol.">
        <title>Histone methylation controls telomerase-independent telomere lengthening in cells undergoing dedifferentiation.</title>
        <authorList>
            <person name="Grafi G."/>
            <person name="Ben-Meir H."/>
            <person name="Avivi Y."/>
            <person name="Moshe M."/>
            <person name="Dahan Y."/>
            <person name="Zemach A."/>
        </authorList>
    </citation>
    <scope>DISRUPTION PHENOTYPE</scope>
</reference>
<reference key="8">
    <citation type="journal article" date="2007" name="J. Cell Sci.">
        <title>Arabidopsis POT1A interacts with TERT-V(I8), an N-terminal splicing variant of telomerase.</title>
        <authorList>
            <person name="Rossignol P."/>
            <person name="Collier S."/>
            <person name="Bush M."/>
            <person name="Shaw P."/>
            <person name="Doonan J.H."/>
        </authorList>
    </citation>
    <scope>INTERACTION WITH POT1A</scope>
</reference>
<reference key="9">
    <citation type="journal article" date="2008" name="Mol. Cell. Biol.">
        <title>Dyskerin is a component of the Arabidopsis telomerase RNP required for telomere maintenance.</title>
        <authorList>
            <person name="Kannan K."/>
            <person name="Nelson A.D."/>
            <person name="Shippen D.E."/>
        </authorList>
    </citation>
    <scope>SUBCELLULAR LOCATION</scope>
</reference>
<reference key="10">
    <citation type="journal article" date="2008" name="Plant Mol. Biol.">
        <title>Role of alternative telomere lengthening unmasked in telomerase knock-out mutant plants.</title>
        <authorList>
            <person name="Ruckova E."/>
            <person name="Friml J."/>
            <person name="Prochazkova Schrumpfova P."/>
            <person name="Fajkus J."/>
        </authorList>
    </citation>
    <scope>DISRUPTION PHENOTYPE</scope>
</reference>
<evidence type="ECO:0000250" key="1"/>
<evidence type="ECO:0000255" key="2">
    <source>
        <dbReference type="PROSITE-ProRule" id="PRU00405"/>
    </source>
</evidence>
<evidence type="ECO:0000256" key="3">
    <source>
        <dbReference type="SAM" id="MobiDB-lite"/>
    </source>
</evidence>
<evidence type="ECO:0000269" key="4">
    <source>
    </source>
</evidence>
<evidence type="ECO:0000269" key="5">
    <source>
    </source>
</evidence>
<evidence type="ECO:0000269" key="6">
    <source>
    </source>
</evidence>
<evidence type="ECO:0000269" key="7">
    <source>
    </source>
</evidence>
<evidence type="ECO:0000269" key="8">
    <source>
    </source>
</evidence>
<evidence type="ECO:0000269" key="9">
    <source>
    </source>
</evidence>
<evidence type="ECO:0000269" key="10">
    <source>
    </source>
</evidence>
<evidence type="ECO:0000269" key="11">
    <source>
    </source>
</evidence>
<evidence type="ECO:0000305" key="12"/>
<accession>Q9SPU7</accession>
<accession>Q9SE99</accession>
<name>TERT_ARATH</name>